<evidence type="ECO:0000255" key="1">
    <source>
        <dbReference type="HAMAP-Rule" id="MF_00758"/>
    </source>
</evidence>
<protein>
    <recommendedName>
        <fullName evidence="1">UPF0301 protein RAF_ORF0041</fullName>
    </recommendedName>
</protein>
<name>Y041_RICAE</name>
<comment type="similarity">
    <text evidence="1">Belongs to the UPF0301 (AlgH) family.</text>
</comment>
<sequence>MGDKIFHNLSGKTLVATPHVITKGIYHKSLIYMLSHTKEGAIGLIFNRLVNHIDLKSFFKIKNDKITTPVMVPIYLGGPVEHEKGFFLHSSDYNKNLLLDFHNDLAVSSNLEISEDIAFGKGPKHSLFIVGYTAWKPGQLEEELETNLWLVMDCNKEFIFADNPESKWHNALKHLGIDEIHFSSQIGNA</sequence>
<proteinExistence type="inferred from homology"/>
<feature type="chain" id="PRO_1000212875" description="UPF0301 protein RAF_ORF0041">
    <location>
        <begin position="1"/>
        <end position="189"/>
    </location>
</feature>
<reference key="1">
    <citation type="journal article" date="2009" name="BMC Genomics">
        <title>Analysis of the Rickettsia africae genome reveals that virulence acquisition in Rickettsia species may be explained by genome reduction.</title>
        <authorList>
            <person name="Fournier P.-E."/>
            <person name="El Karkouri K."/>
            <person name="Leroy Q."/>
            <person name="Robert C."/>
            <person name="Giumelli B."/>
            <person name="Renesto P."/>
            <person name="Socolovschi C."/>
            <person name="Parola P."/>
            <person name="Audic S."/>
            <person name="Raoult D."/>
        </authorList>
    </citation>
    <scope>NUCLEOTIDE SEQUENCE [LARGE SCALE GENOMIC DNA]</scope>
    <source>
        <strain>ESF-5</strain>
    </source>
</reference>
<gene>
    <name type="ordered locus">RAF_ORF0041</name>
</gene>
<dbReference type="EMBL" id="CP001612">
    <property type="protein sequence ID" value="ACP53021.1"/>
    <property type="molecule type" value="Genomic_DNA"/>
</dbReference>
<dbReference type="RefSeq" id="WP_012719323.1">
    <property type="nucleotide sequence ID" value="NC_012633.1"/>
</dbReference>
<dbReference type="SMR" id="C3PM61"/>
<dbReference type="KEGG" id="raf:RAF_ORF0041"/>
<dbReference type="HOGENOM" id="CLU_057596_1_0_5"/>
<dbReference type="Proteomes" id="UP000002305">
    <property type="component" value="Chromosome"/>
</dbReference>
<dbReference type="GO" id="GO:0005829">
    <property type="term" value="C:cytosol"/>
    <property type="evidence" value="ECO:0007669"/>
    <property type="project" value="TreeGrafter"/>
</dbReference>
<dbReference type="Gene3D" id="3.40.1740.10">
    <property type="entry name" value="VC0467-like"/>
    <property type="match status" value="1"/>
</dbReference>
<dbReference type="HAMAP" id="MF_00758">
    <property type="entry name" value="UPF0301"/>
    <property type="match status" value="1"/>
</dbReference>
<dbReference type="InterPro" id="IPR003774">
    <property type="entry name" value="AlgH-like"/>
</dbReference>
<dbReference type="NCBIfam" id="NF001268">
    <property type="entry name" value="PRK00228.1-4"/>
    <property type="match status" value="1"/>
</dbReference>
<dbReference type="PANTHER" id="PTHR30327">
    <property type="entry name" value="UNCHARACTERIZED PROTEIN YQGE"/>
    <property type="match status" value="1"/>
</dbReference>
<dbReference type="PANTHER" id="PTHR30327:SF1">
    <property type="entry name" value="UPF0301 PROTEIN YQGE"/>
    <property type="match status" value="1"/>
</dbReference>
<dbReference type="Pfam" id="PF02622">
    <property type="entry name" value="DUF179"/>
    <property type="match status" value="1"/>
</dbReference>
<dbReference type="SUPFAM" id="SSF143456">
    <property type="entry name" value="VC0467-like"/>
    <property type="match status" value="1"/>
</dbReference>
<organism>
    <name type="scientific">Rickettsia africae (strain ESF-5)</name>
    <dbReference type="NCBI Taxonomy" id="347255"/>
    <lineage>
        <taxon>Bacteria</taxon>
        <taxon>Pseudomonadati</taxon>
        <taxon>Pseudomonadota</taxon>
        <taxon>Alphaproteobacteria</taxon>
        <taxon>Rickettsiales</taxon>
        <taxon>Rickettsiaceae</taxon>
        <taxon>Rickettsieae</taxon>
        <taxon>Rickettsia</taxon>
        <taxon>spotted fever group</taxon>
    </lineage>
</organism>
<accession>C3PM61</accession>